<evidence type="ECO:0000250" key="1">
    <source>
        <dbReference type="UniProtKB" id="O00299"/>
    </source>
</evidence>
<evidence type="ECO:0000250" key="2">
    <source>
        <dbReference type="UniProtKB" id="Q8BXK9"/>
    </source>
</evidence>
<evidence type="ECO:0000250" key="3">
    <source>
        <dbReference type="UniProtKB" id="Q9EPT8"/>
    </source>
</evidence>
<evidence type="ECO:0000250" key="4">
    <source>
        <dbReference type="UniProtKB" id="Q9NZA1"/>
    </source>
</evidence>
<evidence type="ECO:0000255" key="5"/>
<evidence type="ECO:0000255" key="6">
    <source>
        <dbReference type="PROSITE-ProRule" id="PRU00685"/>
    </source>
</evidence>
<evidence type="ECO:0000256" key="7">
    <source>
        <dbReference type="SAM" id="MobiDB-lite"/>
    </source>
</evidence>
<evidence type="ECO:0000269" key="8">
    <source>
    </source>
</evidence>
<evidence type="ECO:0000305" key="9"/>
<evidence type="ECO:0000305" key="10">
    <source>
    </source>
</evidence>
<reference key="1">
    <citation type="journal article" date="1993" name="J. Biol. Chem.">
        <title>Molecular cloning and characterization of p64, a chloride channel protein from kidney microsomes.</title>
        <authorList>
            <person name="Landry D.W."/>
            <person name="Sullivan S."/>
            <person name="Nicolaides M."/>
            <person name="Redhead C."/>
            <person name="Edelman A."/>
            <person name="Field M."/>
            <person name="Al-Awqati Q."/>
            <person name="Edwards J.F."/>
        </authorList>
    </citation>
    <scope>NUCLEOTIDE SEQUENCE [MRNA]</scope>
    <scope>SUBCELLULAR LOCATION</scope>
    <scope>TISSUE SPECIFICITY</scope>
    <source>
        <tissue>Kidney</tissue>
    </source>
</reference>
<reference key="2">
    <citation type="journal article" date="1999" name="J. Neurosci.">
        <title>A 29 kDa intracellular chloride channel p64H1 is associated with large dense-core vesicles in rat hippocampal neurons.</title>
        <authorList>
            <person name="Chuang J.Z."/>
            <person name="Milner T.A."/>
            <person name="Zhu M."/>
            <person name="Sung C.H."/>
        </authorList>
    </citation>
    <scope>NUCLEOTIDE SEQUENCE [MRNA]</scope>
    <source>
        <tissue>Retina</tissue>
    </source>
</reference>
<keyword id="KW-1003">Cell membrane</keyword>
<keyword id="KW-0966">Cell projection</keyword>
<keyword id="KW-0868">Chloride</keyword>
<keyword id="KW-0869">Chloride channel</keyword>
<keyword id="KW-0963">Cytoplasm</keyword>
<keyword id="KW-0206">Cytoskeleton</keyword>
<keyword id="KW-0333">Golgi apparatus</keyword>
<keyword id="KW-1009">Hearing</keyword>
<keyword id="KW-0407">Ion channel</keyword>
<keyword id="KW-0406">Ion transport</keyword>
<keyword id="KW-0472">Membrane</keyword>
<keyword id="KW-0496">Mitochondrion</keyword>
<keyword id="KW-0560">Oxidoreductase</keyword>
<keyword id="KW-0597">Phosphoprotein</keyword>
<keyword id="KW-1185">Reference proteome</keyword>
<keyword id="KW-0677">Repeat</keyword>
<keyword id="KW-0716">Sensory transduction</keyword>
<keyword id="KW-0812">Transmembrane</keyword>
<keyword id="KW-1133">Transmembrane helix</keyword>
<keyword id="KW-0813">Transport</keyword>
<keyword id="KW-0844">Vision</keyword>
<keyword id="KW-0851">Voltage-gated channel</keyword>
<accession>P35526</accession>
<feature type="chain" id="PRO_0000144213" description="Chloride intracellular channel protein 5">
    <location>
        <begin position="1"/>
        <end position="437"/>
    </location>
</feature>
<feature type="transmembrane region" description="Helical; Note=After insertion into the membrane" evidence="5">
    <location>
        <begin position="219"/>
        <end position="239"/>
    </location>
</feature>
<feature type="repeat" description="1">
    <location>
        <begin position="118"/>
        <end position="125"/>
    </location>
</feature>
<feature type="repeat" description="2">
    <location>
        <begin position="126"/>
        <end position="133"/>
    </location>
</feature>
<feature type="repeat" description="3">
    <location>
        <begin position="134"/>
        <end position="141"/>
    </location>
</feature>
<feature type="repeat" description="4">
    <location>
        <begin position="142"/>
        <end position="149"/>
    </location>
</feature>
<feature type="domain" description="GST C-terminal" evidence="6">
    <location>
        <begin position="263"/>
        <end position="427"/>
    </location>
</feature>
<feature type="region of interest" description="Disordered" evidence="7">
    <location>
        <begin position="1"/>
        <end position="197"/>
    </location>
</feature>
<feature type="region of interest" description="4 X 8 AA tandem repeats of [AGQ]-[SP]-D-[PS]-E-E-P-Q">
    <location>
        <begin position="118"/>
        <end position="149"/>
    </location>
</feature>
<feature type="short sequence motif" description="G-site" evidence="1">
    <location>
        <begin position="217"/>
        <end position="220"/>
    </location>
</feature>
<feature type="compositionally biased region" description="Polar residues" evidence="7">
    <location>
        <begin position="1"/>
        <end position="14"/>
    </location>
</feature>
<feature type="compositionally biased region" description="Basic and acidic residues" evidence="7">
    <location>
        <begin position="34"/>
        <end position="45"/>
    </location>
</feature>
<feature type="compositionally biased region" description="Acidic residues" evidence="7">
    <location>
        <begin position="121"/>
        <end position="157"/>
    </location>
</feature>
<feature type="compositionally biased region" description="Polar residues" evidence="7">
    <location>
        <begin position="161"/>
        <end position="184"/>
    </location>
</feature>
<gene>
    <name type="primary">CLIC5</name>
</gene>
<protein>
    <recommendedName>
        <fullName>Chloride intracellular channel protein 5</fullName>
    </recommendedName>
    <alternativeName>
        <fullName>Chlorine channel protein p64</fullName>
    </alternativeName>
    <alternativeName>
        <fullName evidence="1">Glutaredoxin-like oxidoreductase CLIC5</fullName>
        <ecNumber evidence="1">1.8.-.-</ecNumber>
    </alternativeName>
</protein>
<dbReference type="EC" id="1.8.-.-" evidence="1"/>
<dbReference type="EMBL" id="L16547">
    <property type="protein sequence ID" value="AAA02561.1"/>
    <property type="molecule type" value="mRNA"/>
</dbReference>
<dbReference type="EMBL" id="AF109199">
    <property type="protein sequence ID" value="AAD26139.1"/>
    <property type="molecule type" value="mRNA"/>
</dbReference>
<dbReference type="PIR" id="A47104">
    <property type="entry name" value="A47104"/>
</dbReference>
<dbReference type="RefSeq" id="NP_776701.1">
    <property type="nucleotide sequence ID" value="NM_174276.3"/>
</dbReference>
<dbReference type="SMR" id="P35526"/>
<dbReference type="BioGRID" id="159015">
    <property type="interactions" value="1"/>
</dbReference>
<dbReference type="FunCoup" id="P35526">
    <property type="interactions" value="448"/>
</dbReference>
<dbReference type="STRING" id="9913.ENSBTAP00000057011"/>
<dbReference type="TCDB" id="1.A.12.1.1">
    <property type="family name" value="the intracellular chloride channel (clic) family"/>
</dbReference>
<dbReference type="PaxDb" id="9913-ENSBTAP00000013537"/>
<dbReference type="GeneID" id="281696"/>
<dbReference type="KEGG" id="bta:281696"/>
<dbReference type="CTD" id="53405"/>
<dbReference type="eggNOG" id="KOG1422">
    <property type="taxonomic scope" value="Eukaryota"/>
</dbReference>
<dbReference type="InParanoid" id="P35526"/>
<dbReference type="OrthoDB" id="1935530at2759"/>
<dbReference type="Proteomes" id="UP000009136">
    <property type="component" value="Unplaced"/>
</dbReference>
<dbReference type="GO" id="GO:0016324">
    <property type="term" value="C:apical plasma membrane"/>
    <property type="evidence" value="ECO:0007669"/>
    <property type="project" value="UniProtKB-SubCell"/>
</dbReference>
<dbReference type="GO" id="GO:0005938">
    <property type="term" value="C:cell cortex"/>
    <property type="evidence" value="ECO:0007669"/>
    <property type="project" value="UniProtKB-SubCell"/>
</dbReference>
<dbReference type="GO" id="GO:0005813">
    <property type="term" value="C:centrosome"/>
    <property type="evidence" value="ECO:0007669"/>
    <property type="project" value="UniProtKB-SubCell"/>
</dbReference>
<dbReference type="GO" id="GO:0034707">
    <property type="term" value="C:chloride channel complex"/>
    <property type="evidence" value="ECO:0007669"/>
    <property type="project" value="UniProtKB-KW"/>
</dbReference>
<dbReference type="GO" id="GO:0031410">
    <property type="term" value="C:cytoplasmic vesicle"/>
    <property type="evidence" value="ECO:0000304"/>
    <property type="project" value="UniProtKB"/>
</dbReference>
<dbReference type="GO" id="GO:0005794">
    <property type="term" value="C:Golgi apparatus"/>
    <property type="evidence" value="ECO:0007669"/>
    <property type="project" value="UniProtKB-SubCell"/>
</dbReference>
<dbReference type="GO" id="GO:0043231">
    <property type="term" value="C:intracellular membrane-bounded organelle"/>
    <property type="evidence" value="ECO:0000304"/>
    <property type="project" value="UniProtKB"/>
</dbReference>
<dbReference type="GO" id="GO:0005739">
    <property type="term" value="C:mitochondrion"/>
    <property type="evidence" value="ECO:0007669"/>
    <property type="project" value="UniProtKB-SubCell"/>
</dbReference>
<dbReference type="GO" id="GO:0005886">
    <property type="term" value="C:plasma membrane"/>
    <property type="evidence" value="ECO:0000304"/>
    <property type="project" value="UniProtKB"/>
</dbReference>
<dbReference type="GO" id="GO:0032420">
    <property type="term" value="C:stereocilium"/>
    <property type="evidence" value="ECO:0007669"/>
    <property type="project" value="UniProtKB-SubCell"/>
</dbReference>
<dbReference type="GO" id="GO:0005254">
    <property type="term" value="F:chloride channel activity"/>
    <property type="evidence" value="ECO:0000304"/>
    <property type="project" value="UniProtKB"/>
</dbReference>
<dbReference type="GO" id="GO:0016491">
    <property type="term" value="F:oxidoreductase activity"/>
    <property type="evidence" value="ECO:0007669"/>
    <property type="project" value="UniProtKB-KW"/>
</dbReference>
<dbReference type="GO" id="GO:0006821">
    <property type="term" value="P:chloride transport"/>
    <property type="evidence" value="ECO:0000304"/>
    <property type="project" value="UniProtKB"/>
</dbReference>
<dbReference type="GO" id="GO:0007605">
    <property type="term" value="P:sensory perception of sound"/>
    <property type="evidence" value="ECO:0000250"/>
    <property type="project" value="UniProtKB"/>
</dbReference>
<dbReference type="GO" id="GO:0007601">
    <property type="term" value="P:visual perception"/>
    <property type="evidence" value="ECO:0007669"/>
    <property type="project" value="UniProtKB-KW"/>
</dbReference>
<dbReference type="CDD" id="cd10297">
    <property type="entry name" value="GST_C_CLIC5"/>
    <property type="match status" value="1"/>
</dbReference>
<dbReference type="CDD" id="cd03061">
    <property type="entry name" value="GST_N_CLIC"/>
    <property type="match status" value="1"/>
</dbReference>
<dbReference type="FunFam" id="1.20.1050.10:FF:000001">
    <property type="entry name" value="Chloride intracellular channel 2"/>
    <property type="match status" value="1"/>
</dbReference>
<dbReference type="FunFam" id="3.40.30.10:FF:000021">
    <property type="entry name" value="Chloride intracellular channel 4"/>
    <property type="match status" value="1"/>
</dbReference>
<dbReference type="Gene3D" id="1.20.1050.10">
    <property type="match status" value="1"/>
</dbReference>
<dbReference type="Gene3D" id="3.40.30.10">
    <property type="entry name" value="Glutaredoxin"/>
    <property type="match status" value="1"/>
</dbReference>
<dbReference type="InterPro" id="IPR002946">
    <property type="entry name" value="CLIC"/>
</dbReference>
<dbReference type="InterPro" id="IPR042069">
    <property type="entry name" value="CLIC5_C_GST"/>
</dbReference>
<dbReference type="InterPro" id="IPR053823">
    <property type="entry name" value="CLIC_N"/>
</dbReference>
<dbReference type="InterPro" id="IPR010987">
    <property type="entry name" value="Glutathione-S-Trfase_C-like"/>
</dbReference>
<dbReference type="InterPro" id="IPR036282">
    <property type="entry name" value="Glutathione-S-Trfase_C_sf"/>
</dbReference>
<dbReference type="InterPro" id="IPR040079">
    <property type="entry name" value="Glutathione_S-Trfase"/>
</dbReference>
<dbReference type="InterPro" id="IPR036249">
    <property type="entry name" value="Thioredoxin-like_sf"/>
</dbReference>
<dbReference type="NCBIfam" id="TIGR00862">
    <property type="entry name" value="O-ClC"/>
    <property type="match status" value="1"/>
</dbReference>
<dbReference type="PANTHER" id="PTHR45476:SF4">
    <property type="entry name" value="CHLORIDE INTRACELLULAR CHANNEL PROTEIN 5"/>
    <property type="match status" value="1"/>
</dbReference>
<dbReference type="PANTHER" id="PTHR45476">
    <property type="entry name" value="CHLORIDE INTRACELLULAR CHANNEL PROTEIN 6-RELATED"/>
    <property type="match status" value="1"/>
</dbReference>
<dbReference type="Pfam" id="PF22441">
    <property type="entry name" value="CLIC-like_N"/>
    <property type="match status" value="1"/>
</dbReference>
<dbReference type="Pfam" id="PF13410">
    <property type="entry name" value="GST_C_2"/>
    <property type="match status" value="1"/>
</dbReference>
<dbReference type="PRINTS" id="PR01263">
    <property type="entry name" value="INTCLCHANNEL"/>
</dbReference>
<dbReference type="SFLD" id="SFLDS00019">
    <property type="entry name" value="Glutathione_Transferase_(cytos"/>
    <property type="match status" value="1"/>
</dbReference>
<dbReference type="SFLD" id="SFLDG00358">
    <property type="entry name" value="Main_(cytGST)"/>
    <property type="match status" value="1"/>
</dbReference>
<dbReference type="SUPFAM" id="SSF47616">
    <property type="entry name" value="GST C-terminal domain-like"/>
    <property type="match status" value="1"/>
</dbReference>
<dbReference type="SUPFAM" id="SSF52833">
    <property type="entry name" value="Thioredoxin-like"/>
    <property type="match status" value="1"/>
</dbReference>
<dbReference type="PROSITE" id="PS50405">
    <property type="entry name" value="GST_CTER"/>
    <property type="match status" value="1"/>
</dbReference>
<sequence length="437" mass="48959">MNDENYSTTIYNRVQTERVYEDSDPAENGGPLYDEVHEDVRREDNLYVNELENQEYDSVAVYPVGRQGRTSASLQPETGEYVLPDEPYSKAQDPHPGEPTADEDISLEELLSPTKDHQSDSEEPQASDPEEPQASDPEEPQGPDPEEPQENGNEMEADLPSPSSFTIQNSRAFSTREISPTSYSADDVSEGNESASASPEINLFVKAGIDGESIGNCPFSQRLFMILWLKGVVFNVTTVDLKRKPADLHNLAPGTHPPFLTFNGDVKTDVNKIEEFLEETLTPEKYPRLAAKHRESNTAGIDIFVKFSAYIKNTKQQSNAALERGLTKALKKLDDYLNTPLPEEIDADTRGDDEKGSRRKFLDGDELTLADCNLLPKLHVVKIVAKKYRNYDFPAEMTGLWRYLKNAYARDEFTNTCAADSEIELAYADVAKRLSRS</sequence>
<comment type="function">
    <text evidence="1 2 4">In the soluble state, catalyzes glutaredoxin-like thiol disulfide exchange reactions with reduced glutathione as electron donor (By similarity). Can insert into membranes and form non-selective ion channels almost equally permeable to Na(+), K(+) and Cl(-) (By similarity). Required for normal hearing (By similarity). It is necessary for the formation of stereocilia in the inner ear and normal development of the organ of Corti (By similarity). May play a role in the regulation of transepithelial ion absorption and secretion. Is required for the development and/or maintenance of the proper glomerular endothelial cell and podocyte architecture (By similarity). Plays a role in formation of the lens suture in the eye, which is important for normal optical properties of the lens (By similarity).</text>
</comment>
<comment type="catalytic activity">
    <reaction evidence="4">
        <text>Na(+)(in) = Na(+)(out)</text>
        <dbReference type="Rhea" id="RHEA:34963"/>
        <dbReference type="ChEBI" id="CHEBI:29101"/>
    </reaction>
</comment>
<comment type="catalytic activity">
    <reaction evidence="4">
        <text>K(+)(in) = K(+)(out)</text>
        <dbReference type="Rhea" id="RHEA:29463"/>
        <dbReference type="ChEBI" id="CHEBI:29103"/>
    </reaction>
</comment>
<comment type="catalytic activity">
    <reaction evidence="4">
        <text>chloride(in) = chloride(out)</text>
        <dbReference type="Rhea" id="RHEA:29823"/>
        <dbReference type="ChEBI" id="CHEBI:17996"/>
    </reaction>
</comment>
<comment type="activity regulation">
    <text evidence="4">Inhibited by F-actin.</text>
</comment>
<comment type="subunit">
    <text evidence="2 4">Component of a multimeric complex consisting of several cytoskeletal proteins, including actin, ezrin, alpha-actinin, gelsolin, and IQGAP1. Interacts with AKAP9. Interacts with TPRN. TPRN, CLIC5 and PTPQR form concentric rings at the base of stereocilia and may form a complex. Interacts with EZR, MYO6 and RDX; the proteins may work together as a complex to stabilize linkages between the plasma membrane and subjacent actin cytoskeleton at the stereocilium base.</text>
</comment>
<comment type="subcellular location">
    <subcellularLocation>
        <location evidence="4">Golgi apparatus</location>
    </subcellularLocation>
    <subcellularLocation>
        <location evidence="4">Cytoplasm</location>
        <location evidence="4">Cytoskeleton</location>
        <location evidence="4">Microtubule organizing center</location>
        <location evidence="4">Centrosome</location>
    </subcellularLocation>
    <subcellularLocation>
        <location evidence="4">Cytoplasm</location>
        <location evidence="4">Cytoskeleton</location>
    </subcellularLocation>
    <subcellularLocation>
        <location evidence="4">Cytoplasm</location>
        <location evidence="4">Cell cortex</location>
    </subcellularLocation>
    <subcellularLocation>
        <location evidence="10">Membrane</location>
        <topology evidence="5">Single-pass membrane protein</topology>
    </subcellularLocation>
    <subcellularLocation>
        <location evidence="4">Apical cell membrane</location>
        <topology evidence="5">Single-pass membrane protein</topology>
    </subcellularLocation>
    <subcellularLocation>
        <location evidence="1">Cytoplasm</location>
    </subcellularLocation>
    <subcellularLocation>
        <location evidence="3">Mitochondrion</location>
    </subcellularLocation>
    <subcellularLocation>
        <location evidence="3">Cell projection</location>
        <location evidence="3">Stereocilium</location>
    </subcellularLocation>
    <text evidence="1 2 3 4">Colocalizes with AKAP9 at the Golgi apparatus as well as, to a lesser extent, the centrosome (By similarity). Associates with the cortical actin cytoskeleton (By similarity). Localizes to the apical region of cochlear hair cells, at the base of the actin-rich hair bundle (By similarity). Colocalizes with podocalyxin at the apical cell membrane in renal glomeruli (By similarity). May localize to the centrosome in lens epithelial cells (By similarity). Exists both as soluble cytoplasmic protein and as membrane protein with probably a single transmembrane domain (By similarity).</text>
</comment>
<comment type="tissue specificity">
    <text evidence="8">Expressed in most tissues. Higher levels found in kidney, heart, skeletal muscle, T84 and PANC-1 cells.</text>
</comment>
<comment type="domain">
    <text evidence="1">The active G-site contains a monothiol Cys-X-X-Ser motif which mediates glutathione-dependent redox catalysis.</text>
</comment>
<comment type="domain">
    <text evidence="1">Members of this family may change from a globular, soluble state to a state where the N-terminal domain is inserted into the membrane and functions as a chloride channel. The redox status of the active cysteine in Cys-X-X-Cys/Ser motif likely determines the capacity to adopt a soluble or membrane-inserted state. A conformation change of the N-terminal domain is thought to expose hydrophobic surfaces that trigger membrane insertion (By similarity).</text>
</comment>
<comment type="PTM">
    <text evidence="9">Phosphorylated.</text>
</comment>
<comment type="similarity">
    <text evidence="9">Belongs to the chloride channel CLIC family.</text>
</comment>
<organism>
    <name type="scientific">Bos taurus</name>
    <name type="common">Bovine</name>
    <dbReference type="NCBI Taxonomy" id="9913"/>
    <lineage>
        <taxon>Eukaryota</taxon>
        <taxon>Metazoa</taxon>
        <taxon>Chordata</taxon>
        <taxon>Craniata</taxon>
        <taxon>Vertebrata</taxon>
        <taxon>Euteleostomi</taxon>
        <taxon>Mammalia</taxon>
        <taxon>Eutheria</taxon>
        <taxon>Laurasiatheria</taxon>
        <taxon>Artiodactyla</taxon>
        <taxon>Ruminantia</taxon>
        <taxon>Pecora</taxon>
        <taxon>Bovidae</taxon>
        <taxon>Bovinae</taxon>
        <taxon>Bos</taxon>
    </lineage>
</organism>
<name>CLIC5_BOVIN</name>
<proteinExistence type="evidence at transcript level"/>